<comment type="similarity">
    <text evidence="1">Belongs to the universal ribosomal protein uS2 family.</text>
</comment>
<accession>B4SQ23</accession>
<keyword id="KW-0687">Ribonucleoprotein</keyword>
<keyword id="KW-0689">Ribosomal protein</keyword>
<dbReference type="EMBL" id="CP001111">
    <property type="protein sequence ID" value="ACF50971.1"/>
    <property type="molecule type" value="Genomic_DNA"/>
</dbReference>
<dbReference type="RefSeq" id="WP_012510514.1">
    <property type="nucleotide sequence ID" value="NC_011071.1"/>
</dbReference>
<dbReference type="SMR" id="B4SQ23"/>
<dbReference type="STRING" id="391008.Smal_1266"/>
<dbReference type="KEGG" id="smt:Smal_1266"/>
<dbReference type="eggNOG" id="COG0052">
    <property type="taxonomic scope" value="Bacteria"/>
</dbReference>
<dbReference type="HOGENOM" id="CLU_040318_1_2_6"/>
<dbReference type="OrthoDB" id="9808036at2"/>
<dbReference type="Proteomes" id="UP000001867">
    <property type="component" value="Chromosome"/>
</dbReference>
<dbReference type="GO" id="GO:0022627">
    <property type="term" value="C:cytosolic small ribosomal subunit"/>
    <property type="evidence" value="ECO:0007669"/>
    <property type="project" value="TreeGrafter"/>
</dbReference>
<dbReference type="GO" id="GO:0003735">
    <property type="term" value="F:structural constituent of ribosome"/>
    <property type="evidence" value="ECO:0007669"/>
    <property type="project" value="InterPro"/>
</dbReference>
<dbReference type="GO" id="GO:0006412">
    <property type="term" value="P:translation"/>
    <property type="evidence" value="ECO:0007669"/>
    <property type="project" value="UniProtKB-UniRule"/>
</dbReference>
<dbReference type="CDD" id="cd01425">
    <property type="entry name" value="RPS2"/>
    <property type="match status" value="1"/>
</dbReference>
<dbReference type="FunFam" id="1.10.287.610:FF:000001">
    <property type="entry name" value="30S ribosomal protein S2"/>
    <property type="match status" value="1"/>
</dbReference>
<dbReference type="Gene3D" id="3.40.50.10490">
    <property type="entry name" value="Glucose-6-phosphate isomerase like protein, domain 1"/>
    <property type="match status" value="1"/>
</dbReference>
<dbReference type="Gene3D" id="1.10.287.610">
    <property type="entry name" value="Helix hairpin bin"/>
    <property type="match status" value="1"/>
</dbReference>
<dbReference type="HAMAP" id="MF_00291_B">
    <property type="entry name" value="Ribosomal_uS2_B"/>
    <property type="match status" value="1"/>
</dbReference>
<dbReference type="InterPro" id="IPR001865">
    <property type="entry name" value="Ribosomal_uS2"/>
</dbReference>
<dbReference type="InterPro" id="IPR005706">
    <property type="entry name" value="Ribosomal_uS2_bac/mit/plastid"/>
</dbReference>
<dbReference type="InterPro" id="IPR018130">
    <property type="entry name" value="Ribosomal_uS2_CS"/>
</dbReference>
<dbReference type="InterPro" id="IPR023591">
    <property type="entry name" value="Ribosomal_uS2_flav_dom_sf"/>
</dbReference>
<dbReference type="NCBIfam" id="TIGR01011">
    <property type="entry name" value="rpsB_bact"/>
    <property type="match status" value="1"/>
</dbReference>
<dbReference type="PANTHER" id="PTHR12534">
    <property type="entry name" value="30S RIBOSOMAL PROTEIN S2 PROKARYOTIC AND ORGANELLAR"/>
    <property type="match status" value="1"/>
</dbReference>
<dbReference type="PANTHER" id="PTHR12534:SF0">
    <property type="entry name" value="SMALL RIBOSOMAL SUBUNIT PROTEIN US2M"/>
    <property type="match status" value="1"/>
</dbReference>
<dbReference type="Pfam" id="PF00318">
    <property type="entry name" value="Ribosomal_S2"/>
    <property type="match status" value="1"/>
</dbReference>
<dbReference type="PRINTS" id="PR00395">
    <property type="entry name" value="RIBOSOMALS2"/>
</dbReference>
<dbReference type="SUPFAM" id="SSF52313">
    <property type="entry name" value="Ribosomal protein S2"/>
    <property type="match status" value="1"/>
</dbReference>
<dbReference type="PROSITE" id="PS00962">
    <property type="entry name" value="RIBOSOMAL_S2_1"/>
    <property type="match status" value="1"/>
</dbReference>
<dbReference type="PROSITE" id="PS00963">
    <property type="entry name" value="RIBOSOMAL_S2_2"/>
    <property type="match status" value="1"/>
</dbReference>
<feature type="chain" id="PRO_1000115061" description="Small ribosomal subunit protein uS2">
    <location>
        <begin position="1"/>
        <end position="267"/>
    </location>
</feature>
<feature type="region of interest" description="Disordered" evidence="2">
    <location>
        <begin position="232"/>
        <end position="267"/>
    </location>
</feature>
<feature type="compositionally biased region" description="Basic and acidic residues" evidence="2">
    <location>
        <begin position="258"/>
        <end position="267"/>
    </location>
</feature>
<gene>
    <name evidence="1" type="primary">rpsB</name>
    <name type="ordered locus">Smal_1266</name>
</gene>
<evidence type="ECO:0000255" key="1">
    <source>
        <dbReference type="HAMAP-Rule" id="MF_00291"/>
    </source>
</evidence>
<evidence type="ECO:0000256" key="2">
    <source>
        <dbReference type="SAM" id="MobiDB-lite"/>
    </source>
</evidence>
<evidence type="ECO:0000305" key="3"/>
<reference key="1">
    <citation type="submission" date="2008-06" db="EMBL/GenBank/DDBJ databases">
        <title>Complete sequence of Stenotrophomonas maltophilia R551-3.</title>
        <authorList>
            <consortium name="US DOE Joint Genome Institute"/>
            <person name="Lucas S."/>
            <person name="Copeland A."/>
            <person name="Lapidus A."/>
            <person name="Glavina del Rio T."/>
            <person name="Dalin E."/>
            <person name="Tice H."/>
            <person name="Pitluck S."/>
            <person name="Chain P."/>
            <person name="Malfatti S."/>
            <person name="Shin M."/>
            <person name="Vergez L."/>
            <person name="Lang D."/>
            <person name="Schmutz J."/>
            <person name="Larimer F."/>
            <person name="Land M."/>
            <person name="Hauser L."/>
            <person name="Kyrpides N."/>
            <person name="Mikhailova N."/>
            <person name="Taghavi S."/>
            <person name="Monchy S."/>
            <person name="Newman L."/>
            <person name="Vangronsveld J."/>
            <person name="van der Lelie D."/>
            <person name="Richardson P."/>
        </authorList>
    </citation>
    <scope>NUCLEOTIDE SEQUENCE [LARGE SCALE GENOMIC DNA]</scope>
    <source>
        <strain>R551-3</strain>
    </source>
</reference>
<name>RS2_STRM5</name>
<protein>
    <recommendedName>
        <fullName evidence="1">Small ribosomal subunit protein uS2</fullName>
    </recommendedName>
    <alternativeName>
        <fullName evidence="3">30S ribosomal protein S2</fullName>
    </alternativeName>
</protein>
<organism>
    <name type="scientific">Stenotrophomonas maltophilia (strain R551-3)</name>
    <dbReference type="NCBI Taxonomy" id="391008"/>
    <lineage>
        <taxon>Bacteria</taxon>
        <taxon>Pseudomonadati</taxon>
        <taxon>Pseudomonadota</taxon>
        <taxon>Gammaproteobacteria</taxon>
        <taxon>Lysobacterales</taxon>
        <taxon>Lysobacteraceae</taxon>
        <taxon>Stenotrophomonas</taxon>
        <taxon>Stenotrophomonas maltophilia group</taxon>
    </lineage>
</organism>
<sequence length="267" mass="29448">MPQVTMRQMLEAGVHFGHQTRYWNPKMAPYIFGARGKIHIINLEKTVPLFNDAMNFISSVAQKRGTVLFLGTKRSARETIKEEAERCGMPFMNQRWLGGTLTNFRTVKQSVARLKELEAGETDGTFEKLVKHEVLGLRRERDKLEASLGGIKDMNRLPDAIFVIDIGHEDIAIKEAKKLGIPVIAVVDTNYNPELVDYAIPGNDDAIRAVQLYSRAAADAVLEGKAAAPHAATVREEEFADAPAEDAKPARRAPAKKAAADKGEAQA</sequence>
<proteinExistence type="inferred from homology"/>